<proteinExistence type="inferred from homology"/>
<gene>
    <name evidence="4" type="primary">GA2OX2</name>
    <name evidence="7" type="ordered locus">Os01g0332200</name>
    <name evidence="5" type="ordered locus">LOC_Os01g22910</name>
    <name evidence="6" type="ORF">B1140D12.2</name>
</gene>
<evidence type="ECO:0000250" key="1">
    <source>
        <dbReference type="UniProtKB" id="D4N500"/>
    </source>
</evidence>
<evidence type="ECO:0000250" key="2">
    <source>
        <dbReference type="UniProtKB" id="Q5W726"/>
    </source>
</evidence>
<evidence type="ECO:0000255" key="3">
    <source>
        <dbReference type="PROSITE-ProRule" id="PRU00805"/>
    </source>
</evidence>
<evidence type="ECO:0000303" key="4">
    <source>
    </source>
</evidence>
<evidence type="ECO:0000305" key="5"/>
<evidence type="ECO:0000312" key="6">
    <source>
        <dbReference type="EMBL" id="BAD53498.1"/>
    </source>
</evidence>
<evidence type="ECO:0000312" key="7">
    <source>
        <dbReference type="EMBL" id="BAS71921.1"/>
    </source>
</evidence>
<accession>Q5ZA21</accession>
<accession>C7IXN0</accession>
<accession>Q8H947</accession>
<protein>
    <recommendedName>
        <fullName evidence="5">Gibberellin 2-beta-dioxygenase 2</fullName>
        <ecNumber evidence="5">1.14.11.13</ecNumber>
    </recommendedName>
    <alternativeName>
        <fullName evidence="5">Gibberellin 2-beta-hydroxylase 2</fullName>
    </alternativeName>
    <alternativeName>
        <fullName evidence="4">Gibberellin 2-oxidase 2</fullName>
        <shortName evidence="4">GA 2-oxidase 2</shortName>
        <shortName evidence="4">OsGA2ox2</shortName>
    </alternativeName>
</protein>
<feature type="chain" id="PRO_0000444356" description="Gibberellin 2-beta-dioxygenase 2">
    <location>
        <begin position="1"/>
        <end position="370"/>
    </location>
</feature>
<feature type="domain" description="Fe2OG dioxygenase" evidence="3">
    <location>
        <begin position="186"/>
        <end position="306"/>
    </location>
</feature>
<feature type="binding site" evidence="1">
    <location>
        <position position="196"/>
    </location>
    <ligand>
        <name>2-oxoglutarate</name>
        <dbReference type="ChEBI" id="CHEBI:16810"/>
    </ligand>
</feature>
<feature type="binding site" evidence="3">
    <location>
        <position position="224"/>
    </location>
    <ligand>
        <name>Fe cation</name>
        <dbReference type="ChEBI" id="CHEBI:24875"/>
    </ligand>
</feature>
<feature type="binding site" evidence="3">
    <location>
        <position position="226"/>
    </location>
    <ligand>
        <name>Fe cation</name>
        <dbReference type="ChEBI" id="CHEBI:24875"/>
    </ligand>
</feature>
<feature type="binding site" evidence="3">
    <location>
        <position position="287"/>
    </location>
    <ligand>
        <name>Fe cation</name>
        <dbReference type="ChEBI" id="CHEBI:24875"/>
    </ligand>
</feature>
<feature type="binding site" evidence="3">
    <location>
        <position position="297"/>
    </location>
    <ligand>
        <name>2-oxoglutarate</name>
        <dbReference type="ChEBI" id="CHEBI:16810"/>
    </ligand>
</feature>
<feature type="binding site" evidence="1">
    <location>
        <position position="299"/>
    </location>
    <ligand>
        <name>2-oxoglutarate</name>
        <dbReference type="ChEBI" id="CHEBI:16810"/>
    </ligand>
</feature>
<feature type="sequence conflict" description="In Ref. 1; BAC16751." evidence="5" ref="1">
    <original>A</original>
    <variation>G</variation>
    <location>
        <position position="80"/>
    </location>
</feature>
<feature type="sequence conflict" description="In Ref. 1; BAC16751." evidence="5" ref="1">
    <original>V</original>
    <variation>A</variation>
    <location>
        <position position="86"/>
    </location>
</feature>
<feature type="sequence conflict" description="In Ref. 1; BAC16751." evidence="5" ref="1">
    <original>PPD</original>
    <variation>RPT</variation>
    <location>
        <begin position="97"/>
        <end position="99"/>
    </location>
</feature>
<comment type="function">
    <text evidence="2">Catalyzes the 2-beta-hydroxylation of several biologically active gibberellins, leading to the homeostatic regulation of their endogenous level. Catabolism of gibberellins (GAs) plays a central role in plant development.</text>
</comment>
<comment type="catalytic activity">
    <reaction evidence="5">
        <text>gibberellin A1 + 2-oxoglutarate + O2 = gibberellin A8 + succinate + CO2</text>
        <dbReference type="Rhea" id="RHEA:15005"/>
        <dbReference type="ChEBI" id="CHEBI:15379"/>
        <dbReference type="ChEBI" id="CHEBI:16526"/>
        <dbReference type="ChEBI" id="CHEBI:16810"/>
        <dbReference type="ChEBI" id="CHEBI:30031"/>
        <dbReference type="ChEBI" id="CHEBI:58524"/>
        <dbReference type="ChEBI" id="CHEBI:58594"/>
        <dbReference type="EC" id="1.14.11.13"/>
    </reaction>
</comment>
<comment type="cofactor">
    <cofactor evidence="3">
        <name>Fe(2+)</name>
        <dbReference type="ChEBI" id="CHEBI:29033"/>
    </cofactor>
    <text evidence="3">Binds 1 Fe(2+) ion per subunit.</text>
</comment>
<comment type="similarity">
    <text evidence="5">Belongs to the iron/ascorbate-dependent oxidoreductase family. GA2OX subfamily.</text>
</comment>
<comment type="sequence caution" evidence="5">
    <conflict type="erroneous gene model prediction">
        <sequence resource="EMBL-CDS" id="BAH91043"/>
    </conflict>
</comment>
<name>G2OX2_ORYSJ</name>
<keyword id="KW-0223">Dioxygenase</keyword>
<keyword id="KW-0408">Iron</keyword>
<keyword id="KW-0479">Metal-binding</keyword>
<keyword id="KW-0560">Oxidoreductase</keyword>
<keyword id="KW-1185">Reference proteome</keyword>
<organism>
    <name type="scientific">Oryza sativa subsp. japonica</name>
    <name type="common">Rice</name>
    <dbReference type="NCBI Taxonomy" id="39947"/>
    <lineage>
        <taxon>Eukaryota</taxon>
        <taxon>Viridiplantae</taxon>
        <taxon>Streptophyta</taxon>
        <taxon>Embryophyta</taxon>
        <taxon>Tracheophyta</taxon>
        <taxon>Spermatophyta</taxon>
        <taxon>Magnoliopsida</taxon>
        <taxon>Liliopsida</taxon>
        <taxon>Poales</taxon>
        <taxon>Poaceae</taxon>
        <taxon>BOP clade</taxon>
        <taxon>Oryzoideae</taxon>
        <taxon>Oryzeae</taxon>
        <taxon>Oryzinae</taxon>
        <taxon>Oryza</taxon>
        <taxon>Oryza sativa</taxon>
    </lineage>
</organism>
<dbReference type="EC" id="1.14.11.13" evidence="5"/>
<dbReference type="EMBL" id="AB092484">
    <property type="protein sequence ID" value="BAC16751.1"/>
    <property type="molecule type" value="Genomic_DNA"/>
</dbReference>
<dbReference type="EMBL" id="AP003537">
    <property type="protein sequence ID" value="BAD53498.1"/>
    <property type="molecule type" value="Genomic_DNA"/>
</dbReference>
<dbReference type="EMBL" id="AP008207">
    <property type="protein sequence ID" value="BAH91043.1"/>
    <property type="status" value="ALT_SEQ"/>
    <property type="molecule type" value="Genomic_DNA"/>
</dbReference>
<dbReference type="EMBL" id="AP014957">
    <property type="protein sequence ID" value="BAS71921.1"/>
    <property type="molecule type" value="Genomic_DNA"/>
</dbReference>
<dbReference type="SMR" id="Q5ZA21"/>
<dbReference type="FunCoup" id="Q5ZA21">
    <property type="interactions" value="835"/>
</dbReference>
<dbReference type="STRING" id="39947.Q5ZA21"/>
<dbReference type="PaxDb" id="39947-Q5ZA21"/>
<dbReference type="EnsemblPlants" id="Os01t0332200-01">
    <property type="protein sequence ID" value="Os01t0332200-01"/>
    <property type="gene ID" value="Os01g0332200"/>
</dbReference>
<dbReference type="Gramene" id="Os01t0332200-01">
    <property type="protein sequence ID" value="Os01t0332200-01"/>
    <property type="gene ID" value="Os01g0332200"/>
</dbReference>
<dbReference type="KEGG" id="dosa:Os01g0332200"/>
<dbReference type="eggNOG" id="KOG0143">
    <property type="taxonomic scope" value="Eukaryota"/>
</dbReference>
<dbReference type="HOGENOM" id="CLU_010119_8_1_1"/>
<dbReference type="InParanoid" id="Q5ZA21"/>
<dbReference type="OMA" id="ARICCPL"/>
<dbReference type="Proteomes" id="UP000000763">
    <property type="component" value="Chromosome 1"/>
</dbReference>
<dbReference type="Proteomes" id="UP000059680">
    <property type="component" value="Chromosome 1"/>
</dbReference>
<dbReference type="GO" id="GO:0045543">
    <property type="term" value="F:gibberellin 2-beta-dioxygenase activity"/>
    <property type="evidence" value="ECO:0000318"/>
    <property type="project" value="GO_Central"/>
</dbReference>
<dbReference type="GO" id="GO:0046872">
    <property type="term" value="F:metal ion binding"/>
    <property type="evidence" value="ECO:0007669"/>
    <property type="project" value="UniProtKB-KW"/>
</dbReference>
<dbReference type="GO" id="GO:0045487">
    <property type="term" value="P:gibberellin catabolic process"/>
    <property type="evidence" value="ECO:0000318"/>
    <property type="project" value="GO_Central"/>
</dbReference>
<dbReference type="GO" id="GO:0009416">
    <property type="term" value="P:response to light stimulus"/>
    <property type="evidence" value="ECO:0000318"/>
    <property type="project" value="GO_Central"/>
</dbReference>
<dbReference type="FunFam" id="2.60.120.330:FF:000025">
    <property type="entry name" value="Gibberellin 2-beta-dioxygenase 2"/>
    <property type="match status" value="1"/>
</dbReference>
<dbReference type="Gene3D" id="2.60.120.330">
    <property type="entry name" value="B-lactam Antibiotic, Isopenicillin N Synthase, Chain"/>
    <property type="match status" value="1"/>
</dbReference>
<dbReference type="InterPro" id="IPR026992">
    <property type="entry name" value="DIOX_N"/>
</dbReference>
<dbReference type="InterPro" id="IPR044861">
    <property type="entry name" value="IPNS-like_FE2OG_OXY"/>
</dbReference>
<dbReference type="InterPro" id="IPR027443">
    <property type="entry name" value="IPNS-like_sf"/>
</dbReference>
<dbReference type="InterPro" id="IPR050231">
    <property type="entry name" value="Iron_ascorbate_oxido_reductase"/>
</dbReference>
<dbReference type="InterPro" id="IPR005123">
    <property type="entry name" value="Oxoglu/Fe-dep_dioxygenase_dom"/>
</dbReference>
<dbReference type="PANTHER" id="PTHR47990">
    <property type="entry name" value="2-OXOGLUTARATE (2OG) AND FE(II)-DEPENDENT OXYGENASE SUPERFAMILY PROTEIN-RELATED"/>
    <property type="match status" value="1"/>
</dbReference>
<dbReference type="Pfam" id="PF03171">
    <property type="entry name" value="2OG-FeII_Oxy"/>
    <property type="match status" value="1"/>
</dbReference>
<dbReference type="Pfam" id="PF14226">
    <property type="entry name" value="DIOX_N"/>
    <property type="match status" value="1"/>
</dbReference>
<dbReference type="PRINTS" id="PR00682">
    <property type="entry name" value="IPNSYNTHASE"/>
</dbReference>
<dbReference type="SUPFAM" id="SSF51197">
    <property type="entry name" value="Clavaminate synthase-like"/>
    <property type="match status" value="1"/>
</dbReference>
<dbReference type="PROSITE" id="PS51471">
    <property type="entry name" value="FE2OG_OXY"/>
    <property type="match status" value="1"/>
</dbReference>
<reference key="1">
    <citation type="journal article" date="2003" name="J. Plant Res.">
        <title>Expression of novel rice gibberellin 2-oxidase gene is under homeostatic regulation by biologically active gibberellins.</title>
        <authorList>
            <person name="Sakai M."/>
            <person name="Sakamoto T."/>
            <person name="Saito T."/>
            <person name="Matsuoka M."/>
            <person name="Tanaka H."/>
            <person name="Kobayashi M."/>
        </authorList>
    </citation>
    <scope>NUCLEOTIDE SEQUENCE [GENOMIC DNA]</scope>
    <source>
        <strain>cv. Nipponbare</strain>
    </source>
</reference>
<reference key="2">
    <citation type="journal article" date="2002" name="Nature">
        <title>The genome sequence and structure of rice chromosome 1.</title>
        <authorList>
            <person name="Sasaki T."/>
            <person name="Matsumoto T."/>
            <person name="Yamamoto K."/>
            <person name="Sakata K."/>
            <person name="Baba T."/>
            <person name="Katayose Y."/>
            <person name="Wu J."/>
            <person name="Niimura Y."/>
            <person name="Cheng Z."/>
            <person name="Nagamura Y."/>
            <person name="Antonio B.A."/>
            <person name="Kanamori H."/>
            <person name="Hosokawa S."/>
            <person name="Masukawa M."/>
            <person name="Arikawa K."/>
            <person name="Chiden Y."/>
            <person name="Hayashi M."/>
            <person name="Okamoto M."/>
            <person name="Ando T."/>
            <person name="Aoki H."/>
            <person name="Arita K."/>
            <person name="Hamada M."/>
            <person name="Harada C."/>
            <person name="Hijishita S."/>
            <person name="Honda M."/>
            <person name="Ichikawa Y."/>
            <person name="Idonuma A."/>
            <person name="Iijima M."/>
            <person name="Ikeda M."/>
            <person name="Ikeno M."/>
            <person name="Ito S."/>
            <person name="Ito T."/>
            <person name="Ito Y."/>
            <person name="Ito Y."/>
            <person name="Iwabuchi A."/>
            <person name="Kamiya K."/>
            <person name="Karasawa W."/>
            <person name="Katagiri S."/>
            <person name="Kikuta A."/>
            <person name="Kobayashi N."/>
            <person name="Kono I."/>
            <person name="Machita K."/>
            <person name="Maehara T."/>
            <person name="Mizuno H."/>
            <person name="Mizubayashi T."/>
            <person name="Mukai Y."/>
            <person name="Nagasaki H."/>
            <person name="Nakashima M."/>
            <person name="Nakama Y."/>
            <person name="Nakamichi Y."/>
            <person name="Nakamura M."/>
            <person name="Namiki N."/>
            <person name="Negishi M."/>
            <person name="Ohta I."/>
            <person name="Ono N."/>
            <person name="Saji S."/>
            <person name="Sakai K."/>
            <person name="Shibata M."/>
            <person name="Shimokawa T."/>
            <person name="Shomura A."/>
            <person name="Song J."/>
            <person name="Takazaki Y."/>
            <person name="Terasawa K."/>
            <person name="Tsuji K."/>
            <person name="Waki K."/>
            <person name="Yamagata H."/>
            <person name="Yamane H."/>
            <person name="Yoshiki S."/>
            <person name="Yoshihara R."/>
            <person name="Yukawa K."/>
            <person name="Zhong H."/>
            <person name="Iwama H."/>
            <person name="Endo T."/>
            <person name="Ito H."/>
            <person name="Hahn J.H."/>
            <person name="Kim H.-I."/>
            <person name="Eun M.-Y."/>
            <person name="Yano M."/>
            <person name="Jiang J."/>
            <person name="Gojobori T."/>
        </authorList>
    </citation>
    <scope>NUCLEOTIDE SEQUENCE [LARGE SCALE GENOMIC DNA]</scope>
    <source>
        <strain>cv. Nipponbare</strain>
    </source>
</reference>
<reference key="3">
    <citation type="journal article" date="2005" name="Nature">
        <title>The map-based sequence of the rice genome.</title>
        <authorList>
            <consortium name="International rice genome sequencing project (IRGSP)"/>
        </authorList>
    </citation>
    <scope>NUCLEOTIDE SEQUENCE [LARGE SCALE GENOMIC DNA]</scope>
    <source>
        <strain>cv. Nipponbare</strain>
    </source>
</reference>
<reference key="4">
    <citation type="journal article" date="2008" name="Nucleic Acids Res.">
        <title>The rice annotation project database (RAP-DB): 2008 update.</title>
        <authorList>
            <consortium name="The rice annotation project (RAP)"/>
        </authorList>
    </citation>
    <scope>GENOME REANNOTATION</scope>
    <source>
        <strain>cv. Nipponbare</strain>
    </source>
</reference>
<reference key="5">
    <citation type="journal article" date="2013" name="Rice">
        <title>Improvement of the Oryza sativa Nipponbare reference genome using next generation sequence and optical map data.</title>
        <authorList>
            <person name="Kawahara Y."/>
            <person name="de la Bastide M."/>
            <person name="Hamilton J.P."/>
            <person name="Kanamori H."/>
            <person name="McCombie W.R."/>
            <person name="Ouyang S."/>
            <person name="Schwartz D.C."/>
            <person name="Tanaka T."/>
            <person name="Wu J."/>
            <person name="Zhou S."/>
            <person name="Childs K.L."/>
            <person name="Davidson R.M."/>
            <person name="Lin H."/>
            <person name="Quesada-Ocampo L."/>
            <person name="Vaillancourt B."/>
            <person name="Sakai H."/>
            <person name="Lee S.S."/>
            <person name="Kim J."/>
            <person name="Numa H."/>
            <person name="Itoh T."/>
            <person name="Buell C.R."/>
            <person name="Matsumoto T."/>
        </authorList>
    </citation>
    <scope>GENOME REANNOTATION</scope>
    <source>
        <strain>cv. Nipponbare</strain>
    </source>
</reference>
<sequence length="370" mass="38725">MVVPAAAAPECGRREAAAAAAAAVFCRRGRGVVVPTVDMSAPAGRGELSRQVARACAGSGFFRAVNHGVPPRVSAAMDAAAAAFFVRAGAEKQLAGPPDPLGYGSRSIGANGDVGELEYLILHASPDAVARKASAIDREDPRRFSQVVNDYVEAVRQLACHVLDLLGEGLGLRDPTSLTRLITATDNDSLIRINHYPPSCAAAAGDHKSGGGPAPTAAIGFGEHTDPQILSVLRANDADGLQLLLPDAAAAGDSVWVPVPPDPSAFFVNVGDLLQALTNGRLVSIRHRVVVGTGKPRLSTIYFAAPPLHARISALPETVAAGAPRRYRAFTWAEYKRTMYTLRLSHNRLDLFHAGDGDGDAGVGDDDDHE</sequence>